<reference key="1">
    <citation type="journal article" date="1991" name="Science">
        <title>Characterization of a cofactor that regulates dimerization of a mammalian homeodomain protein.</title>
        <authorList>
            <person name="Mendel D.B."/>
            <person name="Khavari P.A."/>
            <person name="Conley P.B."/>
            <person name="Graves M.K."/>
            <person name="Hansen L.P."/>
            <person name="Admon A."/>
            <person name="Crabtree G.R."/>
        </authorList>
    </citation>
    <scope>NUCLEOTIDE SEQUENCE [MRNA]</scope>
    <scope>PARTIAL PROTEIN SEQUENCE</scope>
    <source>
        <strain>C57BL/6 X CBA</strain>
        <tissue>Liver</tissue>
    </source>
</reference>
<reference key="2">
    <citation type="journal article" date="2005" name="Science">
        <title>The transcriptional landscape of the mammalian genome.</title>
        <authorList>
            <person name="Carninci P."/>
            <person name="Kasukawa T."/>
            <person name="Katayama S."/>
            <person name="Gough J."/>
            <person name="Frith M.C."/>
            <person name="Maeda N."/>
            <person name="Oyama R."/>
            <person name="Ravasi T."/>
            <person name="Lenhard B."/>
            <person name="Wells C."/>
            <person name="Kodzius R."/>
            <person name="Shimokawa K."/>
            <person name="Bajic V.B."/>
            <person name="Brenner S.E."/>
            <person name="Batalov S."/>
            <person name="Forrest A.R."/>
            <person name="Zavolan M."/>
            <person name="Davis M.J."/>
            <person name="Wilming L.G."/>
            <person name="Aidinis V."/>
            <person name="Allen J.E."/>
            <person name="Ambesi-Impiombato A."/>
            <person name="Apweiler R."/>
            <person name="Aturaliya R.N."/>
            <person name="Bailey T.L."/>
            <person name="Bansal M."/>
            <person name="Baxter L."/>
            <person name="Beisel K.W."/>
            <person name="Bersano T."/>
            <person name="Bono H."/>
            <person name="Chalk A.M."/>
            <person name="Chiu K.P."/>
            <person name="Choudhary V."/>
            <person name="Christoffels A."/>
            <person name="Clutterbuck D.R."/>
            <person name="Crowe M.L."/>
            <person name="Dalla E."/>
            <person name="Dalrymple B.P."/>
            <person name="de Bono B."/>
            <person name="Della Gatta G."/>
            <person name="di Bernardo D."/>
            <person name="Down T."/>
            <person name="Engstrom P."/>
            <person name="Fagiolini M."/>
            <person name="Faulkner G."/>
            <person name="Fletcher C.F."/>
            <person name="Fukushima T."/>
            <person name="Furuno M."/>
            <person name="Futaki S."/>
            <person name="Gariboldi M."/>
            <person name="Georgii-Hemming P."/>
            <person name="Gingeras T.R."/>
            <person name="Gojobori T."/>
            <person name="Green R.E."/>
            <person name="Gustincich S."/>
            <person name="Harbers M."/>
            <person name="Hayashi Y."/>
            <person name="Hensch T.K."/>
            <person name="Hirokawa N."/>
            <person name="Hill D."/>
            <person name="Huminiecki L."/>
            <person name="Iacono M."/>
            <person name="Ikeo K."/>
            <person name="Iwama A."/>
            <person name="Ishikawa T."/>
            <person name="Jakt M."/>
            <person name="Kanapin A."/>
            <person name="Katoh M."/>
            <person name="Kawasawa Y."/>
            <person name="Kelso J."/>
            <person name="Kitamura H."/>
            <person name="Kitano H."/>
            <person name="Kollias G."/>
            <person name="Krishnan S.P."/>
            <person name="Kruger A."/>
            <person name="Kummerfeld S.K."/>
            <person name="Kurochkin I.V."/>
            <person name="Lareau L.F."/>
            <person name="Lazarevic D."/>
            <person name="Lipovich L."/>
            <person name="Liu J."/>
            <person name="Liuni S."/>
            <person name="McWilliam S."/>
            <person name="Madan Babu M."/>
            <person name="Madera M."/>
            <person name="Marchionni L."/>
            <person name="Matsuda H."/>
            <person name="Matsuzawa S."/>
            <person name="Miki H."/>
            <person name="Mignone F."/>
            <person name="Miyake S."/>
            <person name="Morris K."/>
            <person name="Mottagui-Tabar S."/>
            <person name="Mulder N."/>
            <person name="Nakano N."/>
            <person name="Nakauchi H."/>
            <person name="Ng P."/>
            <person name="Nilsson R."/>
            <person name="Nishiguchi S."/>
            <person name="Nishikawa S."/>
            <person name="Nori F."/>
            <person name="Ohara O."/>
            <person name="Okazaki Y."/>
            <person name="Orlando V."/>
            <person name="Pang K.C."/>
            <person name="Pavan W.J."/>
            <person name="Pavesi G."/>
            <person name="Pesole G."/>
            <person name="Petrovsky N."/>
            <person name="Piazza S."/>
            <person name="Reed J."/>
            <person name="Reid J.F."/>
            <person name="Ring B.Z."/>
            <person name="Ringwald M."/>
            <person name="Rost B."/>
            <person name="Ruan Y."/>
            <person name="Salzberg S.L."/>
            <person name="Sandelin A."/>
            <person name="Schneider C."/>
            <person name="Schoenbach C."/>
            <person name="Sekiguchi K."/>
            <person name="Semple C.A."/>
            <person name="Seno S."/>
            <person name="Sessa L."/>
            <person name="Sheng Y."/>
            <person name="Shibata Y."/>
            <person name="Shimada H."/>
            <person name="Shimada K."/>
            <person name="Silva D."/>
            <person name="Sinclair B."/>
            <person name="Sperling S."/>
            <person name="Stupka E."/>
            <person name="Sugiura K."/>
            <person name="Sultana R."/>
            <person name="Takenaka Y."/>
            <person name="Taki K."/>
            <person name="Tammoja K."/>
            <person name="Tan S.L."/>
            <person name="Tang S."/>
            <person name="Taylor M.S."/>
            <person name="Tegner J."/>
            <person name="Teichmann S.A."/>
            <person name="Ueda H.R."/>
            <person name="van Nimwegen E."/>
            <person name="Verardo R."/>
            <person name="Wei C.L."/>
            <person name="Yagi K."/>
            <person name="Yamanishi H."/>
            <person name="Zabarovsky E."/>
            <person name="Zhu S."/>
            <person name="Zimmer A."/>
            <person name="Hide W."/>
            <person name="Bult C."/>
            <person name="Grimmond S.M."/>
            <person name="Teasdale R.D."/>
            <person name="Liu E.T."/>
            <person name="Brusic V."/>
            <person name="Quackenbush J."/>
            <person name="Wahlestedt C."/>
            <person name="Mattick J.S."/>
            <person name="Hume D.A."/>
            <person name="Kai C."/>
            <person name="Sasaki D."/>
            <person name="Tomaru Y."/>
            <person name="Fukuda S."/>
            <person name="Kanamori-Katayama M."/>
            <person name="Suzuki M."/>
            <person name="Aoki J."/>
            <person name="Arakawa T."/>
            <person name="Iida J."/>
            <person name="Imamura K."/>
            <person name="Itoh M."/>
            <person name="Kato T."/>
            <person name="Kawaji H."/>
            <person name="Kawagashira N."/>
            <person name="Kawashima T."/>
            <person name="Kojima M."/>
            <person name="Kondo S."/>
            <person name="Konno H."/>
            <person name="Nakano K."/>
            <person name="Ninomiya N."/>
            <person name="Nishio T."/>
            <person name="Okada M."/>
            <person name="Plessy C."/>
            <person name="Shibata K."/>
            <person name="Shiraki T."/>
            <person name="Suzuki S."/>
            <person name="Tagami M."/>
            <person name="Waki K."/>
            <person name="Watahiki A."/>
            <person name="Okamura-Oho Y."/>
            <person name="Suzuki H."/>
            <person name="Kawai J."/>
            <person name="Hayashizaki Y."/>
        </authorList>
    </citation>
    <scope>NUCLEOTIDE SEQUENCE [LARGE SCALE MRNA]</scope>
    <source>
        <strain>C57BL/6J</strain>
        <tissue>Pancreas</tissue>
    </source>
</reference>
<reference key="3">
    <citation type="journal article" date="2004" name="Genome Res.">
        <title>The status, quality, and expansion of the NIH full-length cDNA project: the Mammalian Gene Collection (MGC).</title>
        <authorList>
            <consortium name="The MGC Project Team"/>
        </authorList>
    </citation>
    <scope>NUCLEOTIDE SEQUENCE [LARGE SCALE MRNA]</scope>
    <source>
        <strain>FVB/N</strain>
        <tissue>Liver</tissue>
    </source>
</reference>
<reference key="4">
    <citation type="journal article" date="2010" name="Cell">
        <title>A tissue-specific atlas of mouse protein phosphorylation and expression.</title>
        <authorList>
            <person name="Huttlin E.L."/>
            <person name="Jedrychowski M.P."/>
            <person name="Elias J.E."/>
            <person name="Goswami T."/>
            <person name="Rad R."/>
            <person name="Beausoleil S.A."/>
            <person name="Villen J."/>
            <person name="Haas W."/>
            <person name="Sowa M.E."/>
            <person name="Gygi S.P."/>
        </authorList>
    </citation>
    <scope>IDENTIFICATION BY MASS SPECTROMETRY [LARGE SCALE ANALYSIS]</scope>
    <source>
        <tissue>Brain</tissue>
        <tissue>Kidney</tissue>
        <tissue>Liver</tissue>
        <tissue>Pancreas</tissue>
    </source>
</reference>
<reference key="5">
    <citation type="journal article" date="2014" name="J. Am. Soc. Nephrol.">
        <title>Mutations in PCBD1 cause hypomagnesemia and renal magnesium wasting.</title>
        <authorList>
            <person name="Ferre S."/>
            <person name="de Baaij J.H."/>
            <person name="Ferreira P."/>
            <person name="Germann R."/>
            <person name="de Klerk J.B."/>
            <person name="Lavrijsen M."/>
            <person name="van Zeeland F."/>
            <person name="Venselaar H."/>
            <person name="Kluijtmans L.A."/>
            <person name="Hoenderop J.G."/>
            <person name="Bindels R.J."/>
        </authorList>
    </citation>
    <scope>TISSUE SPECIFICITY</scope>
    <scope>INDUCTION BY LOW MAGNESIUM</scope>
</reference>
<accession>P61458</accession>
<accession>P70519</accession>
<accession>P80095</accession>
<accession>Q9D930</accession>
<evidence type="ECO:0000250" key="1"/>
<evidence type="ECO:0000250" key="2">
    <source>
        <dbReference type="UniProtKB" id="P35680"/>
    </source>
</evidence>
<evidence type="ECO:0000250" key="3">
    <source>
        <dbReference type="UniProtKB" id="P61457"/>
    </source>
</evidence>
<evidence type="ECO:0000250" key="4">
    <source>
        <dbReference type="UniProtKB" id="P61459"/>
    </source>
</evidence>
<evidence type="ECO:0000269" key="5">
    <source>
    </source>
</evidence>
<evidence type="ECO:0000305" key="6"/>
<protein>
    <recommendedName>
        <fullName>Pterin-4-alpha-carbinolamine dehydratase</fullName>
        <shortName>PHS</shortName>
        <ecNumber evidence="4">4.2.1.96</ecNumber>
    </recommendedName>
    <alternativeName>
        <fullName>4-alpha-hydroxy-tetrahydropterin dehydratase</fullName>
    </alternativeName>
    <alternativeName>
        <fullName>Dimerization cofactor of hepatocyte nuclear factor 1-alpha</fullName>
        <shortName>DCoH</shortName>
        <shortName>Dimerization cofactor of HNF1</shortName>
    </alternativeName>
    <alternativeName>
        <fullName>Phenylalanine hydroxylase-stimulating protein</fullName>
    </alternativeName>
    <alternativeName>
        <fullName>Pterin carbinolamine dehydratase</fullName>
        <shortName>PCD</shortName>
    </alternativeName>
</protein>
<keyword id="KW-0007">Acetylation</keyword>
<keyword id="KW-0010">Activator</keyword>
<keyword id="KW-0963">Cytoplasm</keyword>
<keyword id="KW-0903">Direct protein sequencing</keyword>
<keyword id="KW-0456">Lyase</keyword>
<keyword id="KW-0539">Nucleus</keyword>
<keyword id="KW-1185">Reference proteome</keyword>
<keyword id="KW-0783">Tetrahydrobiopterin biosynthesis</keyword>
<keyword id="KW-0804">Transcription</keyword>
<keyword id="KW-0805">Transcription regulation</keyword>
<sequence length="104" mass="11986">MAGKAHRLSAEERDQLLPNLRAVGWNEVEGRDAIFKQFHFKDFNRAFGFMTRVALQAEKLDHHPEWFNVYNKVHITLSTHECAGLSERDINLASFIEQVAVSMT</sequence>
<feature type="initiator methionine" description="Removed" evidence="3">
    <location>
        <position position="1"/>
    </location>
</feature>
<feature type="chain" id="PRO_0000063053" description="Pterin-4-alpha-carbinolamine dehydratase">
    <location>
        <begin position="2"/>
        <end position="104"/>
    </location>
</feature>
<feature type="binding site" evidence="1">
    <location>
        <begin position="61"/>
        <end position="63"/>
    </location>
    <ligand>
        <name>substrate</name>
    </ligand>
</feature>
<feature type="binding site" evidence="1">
    <location>
        <begin position="78"/>
        <end position="81"/>
    </location>
    <ligand>
        <name>substrate</name>
    </ligand>
</feature>
<feature type="modified residue" description="N-acetylalanine" evidence="3">
    <location>
        <position position="2"/>
    </location>
</feature>
<comment type="function">
    <text evidence="3 4">Involved in tetrahydrobiopterin biosynthesis. Seems to both prevent the formation of 7-pterins and accelerate the formation of quinonoid-BH2. Coactivator for HNF1A-dependent transcription. Regulates the dimerization of homeodomain protein HNF1A and enhances its transcriptional activity (By similarity). Also acts as a coactivator for HNF1B-dependent transcription (By similarity).</text>
</comment>
<comment type="catalytic activity">
    <reaction evidence="4">
        <text>(4aS,6R)-4a-hydroxy-L-erythro-5,6,7,8-tetrahydrobiopterin = (6R)-L-erythro-6,7-dihydrobiopterin + H2O</text>
        <dbReference type="Rhea" id="RHEA:11920"/>
        <dbReference type="ChEBI" id="CHEBI:15377"/>
        <dbReference type="ChEBI" id="CHEBI:15642"/>
        <dbReference type="ChEBI" id="CHEBI:43120"/>
        <dbReference type="EC" id="4.2.1.96"/>
    </reaction>
</comment>
<comment type="subunit">
    <text evidence="2 4">Homotetramer and homodimer. Heterotetramer with HNF1A; formed by a dimer of dimers (By similarity). Interacts with HNF1B (via HNF-p1 domain); the interaction increases HNF1B transactivation activity (By similarity).</text>
</comment>
<comment type="subcellular location">
    <subcellularLocation>
        <location evidence="4">Cytoplasm</location>
    </subcellularLocation>
    <subcellularLocation>
        <location evidence="4">Nucleus</location>
    </subcellularLocation>
    <text evidence="2">Recruited to the nucleus through the interaction with HNF1B.</text>
</comment>
<comment type="tissue specificity">
    <text evidence="5">Mainly expressed in the liver, in pancreatic cells, and in the kidney, especially in the distal convoluted tubule, in the cortical thick ascending limb of Henle's loop and in the connecting tubule.</text>
</comment>
<comment type="induction">
    <text evidence="5">Up-regulated by a low magnesium-containing diet.</text>
</comment>
<comment type="similarity">
    <text evidence="6">Belongs to the pterin-4-alpha-carbinolamine dehydratase family.</text>
</comment>
<name>PHS_MOUSE</name>
<organism>
    <name type="scientific">Mus musculus</name>
    <name type="common">Mouse</name>
    <dbReference type="NCBI Taxonomy" id="10090"/>
    <lineage>
        <taxon>Eukaryota</taxon>
        <taxon>Metazoa</taxon>
        <taxon>Chordata</taxon>
        <taxon>Craniata</taxon>
        <taxon>Vertebrata</taxon>
        <taxon>Euteleostomi</taxon>
        <taxon>Mammalia</taxon>
        <taxon>Eutheria</taxon>
        <taxon>Euarchontoglires</taxon>
        <taxon>Glires</taxon>
        <taxon>Rodentia</taxon>
        <taxon>Myomorpha</taxon>
        <taxon>Muroidea</taxon>
        <taxon>Muridae</taxon>
        <taxon>Murinae</taxon>
        <taxon>Mus</taxon>
        <taxon>Mus</taxon>
    </lineage>
</organism>
<dbReference type="EC" id="4.2.1.96" evidence="4"/>
<dbReference type="EMBL" id="M83741">
    <property type="status" value="NOT_ANNOTATED_CDS"/>
    <property type="molecule type" value="mRNA"/>
</dbReference>
<dbReference type="EMBL" id="AK007401">
    <property type="protein sequence ID" value="BAB25014.1"/>
    <property type="molecule type" value="mRNA"/>
</dbReference>
<dbReference type="EMBL" id="BC024354">
    <property type="protein sequence ID" value="AAH24354.1"/>
    <property type="molecule type" value="mRNA"/>
</dbReference>
<dbReference type="CCDS" id="CCDS35913.1"/>
<dbReference type="RefSeq" id="NP_079549.1">
    <property type="nucleotide sequence ID" value="NM_025273.4"/>
</dbReference>
<dbReference type="SMR" id="P61458"/>
<dbReference type="BioGRID" id="199068">
    <property type="interactions" value="21"/>
</dbReference>
<dbReference type="FunCoup" id="P61458">
    <property type="interactions" value="825"/>
</dbReference>
<dbReference type="IntAct" id="P61458">
    <property type="interactions" value="17"/>
</dbReference>
<dbReference type="MINT" id="P61458"/>
<dbReference type="STRING" id="10090.ENSMUSP00000020298"/>
<dbReference type="iPTMnet" id="P61458"/>
<dbReference type="PhosphoSitePlus" id="P61458"/>
<dbReference type="SwissPalm" id="P61458"/>
<dbReference type="jPOST" id="P61458"/>
<dbReference type="PaxDb" id="10090-ENSMUSP00000020298"/>
<dbReference type="PeptideAtlas" id="P61458"/>
<dbReference type="ProteomicsDB" id="288146"/>
<dbReference type="Antibodypedia" id="29081">
    <property type="antibodies" value="233 antibodies from 28 providers"/>
</dbReference>
<dbReference type="DNASU" id="13180"/>
<dbReference type="Ensembl" id="ENSMUST00000020298.8">
    <property type="protein sequence ID" value="ENSMUSP00000020298.7"/>
    <property type="gene ID" value="ENSMUSG00000020098.8"/>
</dbReference>
<dbReference type="GeneID" id="13180"/>
<dbReference type="KEGG" id="mmu:13180"/>
<dbReference type="UCSC" id="uc007ffj.3">
    <property type="organism name" value="mouse"/>
</dbReference>
<dbReference type="AGR" id="MGI:94873"/>
<dbReference type="CTD" id="5092"/>
<dbReference type="MGI" id="MGI:94873">
    <property type="gene designation" value="Pcbd1"/>
</dbReference>
<dbReference type="VEuPathDB" id="HostDB:ENSMUSG00000020098"/>
<dbReference type="eggNOG" id="KOG4073">
    <property type="taxonomic scope" value="Eukaryota"/>
</dbReference>
<dbReference type="GeneTree" id="ENSGT00390000007221"/>
<dbReference type="HOGENOM" id="CLU_081974_3_2_1"/>
<dbReference type="InParanoid" id="P61458"/>
<dbReference type="OMA" id="WAEKWNH"/>
<dbReference type="OrthoDB" id="277398at2759"/>
<dbReference type="PhylomeDB" id="P61458"/>
<dbReference type="TreeFam" id="TF300188"/>
<dbReference type="Reactome" id="R-MMU-8964208">
    <property type="pathway name" value="Phenylalanine metabolism"/>
</dbReference>
<dbReference type="BioGRID-ORCS" id="13180">
    <property type="hits" value="1 hit in 80 CRISPR screens"/>
</dbReference>
<dbReference type="PRO" id="PR:P61458"/>
<dbReference type="Proteomes" id="UP000000589">
    <property type="component" value="Chromosome 10"/>
</dbReference>
<dbReference type="RNAct" id="P61458">
    <property type="molecule type" value="protein"/>
</dbReference>
<dbReference type="Bgee" id="ENSMUSG00000020098">
    <property type="expression patterns" value="Expressed in right kidney and 193 other cell types or tissues"/>
</dbReference>
<dbReference type="ExpressionAtlas" id="P61458">
    <property type="expression patterns" value="baseline and differential"/>
</dbReference>
<dbReference type="GO" id="GO:0005829">
    <property type="term" value="C:cytosol"/>
    <property type="evidence" value="ECO:0007669"/>
    <property type="project" value="Ensembl"/>
</dbReference>
<dbReference type="GO" id="GO:0005654">
    <property type="term" value="C:nucleoplasm"/>
    <property type="evidence" value="ECO:0007669"/>
    <property type="project" value="Ensembl"/>
</dbReference>
<dbReference type="GO" id="GO:0005634">
    <property type="term" value="C:nucleus"/>
    <property type="evidence" value="ECO:0000353"/>
    <property type="project" value="MGI"/>
</dbReference>
<dbReference type="GO" id="GO:0008124">
    <property type="term" value="F:4-alpha-hydroxytetrahydrobiopterin dehydratase activity"/>
    <property type="evidence" value="ECO:0007669"/>
    <property type="project" value="UniProtKB-EC"/>
</dbReference>
<dbReference type="GO" id="GO:0042802">
    <property type="term" value="F:identical protein binding"/>
    <property type="evidence" value="ECO:0000353"/>
    <property type="project" value="MGI"/>
</dbReference>
<dbReference type="GO" id="GO:0004505">
    <property type="term" value="F:phenylalanine 4-monooxygenase activity"/>
    <property type="evidence" value="ECO:0000314"/>
    <property type="project" value="MGI"/>
</dbReference>
<dbReference type="GO" id="GO:0003713">
    <property type="term" value="F:transcription coactivator activity"/>
    <property type="evidence" value="ECO:0000266"/>
    <property type="project" value="MGI"/>
</dbReference>
<dbReference type="GO" id="GO:0045893">
    <property type="term" value="P:positive regulation of DNA-templated transcription"/>
    <property type="evidence" value="ECO:0000266"/>
    <property type="project" value="MGI"/>
</dbReference>
<dbReference type="GO" id="GO:0006729">
    <property type="term" value="P:tetrahydrobiopterin biosynthetic process"/>
    <property type="evidence" value="ECO:0007669"/>
    <property type="project" value="UniProtKB-KW"/>
</dbReference>
<dbReference type="CDD" id="cd00914">
    <property type="entry name" value="PCD_DCoH_subfamily_b"/>
    <property type="match status" value="1"/>
</dbReference>
<dbReference type="FunFam" id="3.30.1360.20:FF:000001">
    <property type="entry name" value="Pterin-4-alpha-carbinolamine dehydratase 2"/>
    <property type="match status" value="1"/>
</dbReference>
<dbReference type="Gene3D" id="3.30.1360.20">
    <property type="entry name" value="Transcriptional coactivator/pterin dehydratase"/>
    <property type="match status" value="1"/>
</dbReference>
<dbReference type="HAMAP" id="MF_00434">
    <property type="entry name" value="Pterin_4_alpha"/>
    <property type="match status" value="1"/>
</dbReference>
<dbReference type="InterPro" id="IPR036428">
    <property type="entry name" value="PCD_sf"/>
</dbReference>
<dbReference type="InterPro" id="IPR001533">
    <property type="entry name" value="Pterin_deHydtase"/>
</dbReference>
<dbReference type="NCBIfam" id="NF002018">
    <property type="entry name" value="PRK00823.1-3"/>
    <property type="match status" value="1"/>
</dbReference>
<dbReference type="NCBIfam" id="NF002020">
    <property type="entry name" value="PRK00823.1-5"/>
    <property type="match status" value="1"/>
</dbReference>
<dbReference type="PANTHER" id="PTHR12599">
    <property type="entry name" value="PTERIN-4-ALPHA-CARBINOLAMINE DEHYDRATASE"/>
    <property type="match status" value="1"/>
</dbReference>
<dbReference type="PANTHER" id="PTHR12599:SF13">
    <property type="entry name" value="PTERIN-4-ALPHA-CARBINOLAMINE DEHYDRATASE"/>
    <property type="match status" value="1"/>
</dbReference>
<dbReference type="Pfam" id="PF01329">
    <property type="entry name" value="Pterin_4a"/>
    <property type="match status" value="1"/>
</dbReference>
<dbReference type="SUPFAM" id="SSF55248">
    <property type="entry name" value="PCD-like"/>
    <property type="match status" value="1"/>
</dbReference>
<proteinExistence type="evidence at protein level"/>
<gene>
    <name type="primary">Pcbd1</name>
    <name type="synonym">Dcoh</name>
    <name type="synonym">Pcbd</name>
</gene>